<dbReference type="EC" id="3.6.1.-" evidence="2"/>
<dbReference type="EMBL" id="U37062">
    <property type="protein sequence ID" value="AAC59783.1"/>
    <property type="molecule type" value="mRNA"/>
</dbReference>
<dbReference type="EMBL" id="X84990">
    <property type="protein sequence ID" value="CAA59350.1"/>
    <property type="molecule type" value="mRNA"/>
</dbReference>
<dbReference type="EMBL" id="BC048365">
    <property type="protein sequence ID" value="AAH48365.1"/>
    <property type="molecule type" value="mRNA"/>
</dbReference>
<dbReference type="PIR" id="S54210">
    <property type="entry name" value="S54210"/>
</dbReference>
<dbReference type="RefSeq" id="NP_001080812.1">
    <property type="nucleotide sequence ID" value="NM_001087343.1"/>
</dbReference>
<dbReference type="RefSeq" id="XP_018089033.1">
    <property type="nucleotide sequence ID" value="XM_018233544.1"/>
</dbReference>
<dbReference type="SMR" id="P50143"/>
<dbReference type="BioGRID" id="98748">
    <property type="interactions" value="3"/>
</dbReference>
<dbReference type="DNASU" id="380506"/>
<dbReference type="GeneID" id="380506"/>
<dbReference type="KEGG" id="xla:380506"/>
<dbReference type="AGR" id="Xenbase:XB-GENE-6250719"/>
<dbReference type="CTD" id="380506"/>
<dbReference type="Xenbase" id="XB-GENE-6250719">
    <property type="gene designation" value="cct3.S"/>
</dbReference>
<dbReference type="OrthoDB" id="275057at2759"/>
<dbReference type="CD-CODE" id="78E86D56">
    <property type="entry name" value="Mitochondrial cloud"/>
</dbReference>
<dbReference type="Proteomes" id="UP000186698">
    <property type="component" value="Chromosome 8S"/>
</dbReference>
<dbReference type="Bgee" id="108700399">
    <property type="expression patterns" value="Expressed in testis and 19 other cell types or tissues"/>
</dbReference>
<dbReference type="GO" id="GO:0005832">
    <property type="term" value="C:chaperonin-containing T-complex"/>
    <property type="evidence" value="ECO:0000318"/>
    <property type="project" value="GO_Central"/>
</dbReference>
<dbReference type="GO" id="GO:0005524">
    <property type="term" value="F:ATP binding"/>
    <property type="evidence" value="ECO:0007669"/>
    <property type="project" value="UniProtKB-KW"/>
</dbReference>
<dbReference type="GO" id="GO:0016887">
    <property type="term" value="F:ATP hydrolysis activity"/>
    <property type="evidence" value="ECO:0007669"/>
    <property type="project" value="InterPro"/>
</dbReference>
<dbReference type="GO" id="GO:0140662">
    <property type="term" value="F:ATP-dependent protein folding chaperone"/>
    <property type="evidence" value="ECO:0007669"/>
    <property type="project" value="InterPro"/>
</dbReference>
<dbReference type="GO" id="GO:0051082">
    <property type="term" value="F:unfolded protein binding"/>
    <property type="evidence" value="ECO:0000318"/>
    <property type="project" value="GO_Central"/>
</dbReference>
<dbReference type="GO" id="GO:0006457">
    <property type="term" value="P:protein folding"/>
    <property type="evidence" value="ECO:0000318"/>
    <property type="project" value="GO_Central"/>
</dbReference>
<dbReference type="CDD" id="cd03337">
    <property type="entry name" value="TCP1_gamma"/>
    <property type="match status" value="1"/>
</dbReference>
<dbReference type="FunFam" id="1.10.560.10:FF:000069">
    <property type="entry name" value="T-complex protein 1 subunit gamma"/>
    <property type="match status" value="1"/>
</dbReference>
<dbReference type="FunFam" id="1.10.560.10:FF:000076">
    <property type="entry name" value="T-complex protein 1 subunit gamma"/>
    <property type="match status" value="1"/>
</dbReference>
<dbReference type="FunFam" id="3.50.7.10:FF:000005">
    <property type="entry name" value="T-complex protein 1 subunit gamma"/>
    <property type="match status" value="1"/>
</dbReference>
<dbReference type="Gene3D" id="3.50.7.10">
    <property type="entry name" value="GroEL"/>
    <property type="match status" value="1"/>
</dbReference>
<dbReference type="Gene3D" id="1.10.560.10">
    <property type="entry name" value="GroEL-like equatorial domain"/>
    <property type="match status" value="1"/>
</dbReference>
<dbReference type="Gene3D" id="3.30.260.10">
    <property type="entry name" value="TCP-1-like chaperonin intermediate domain"/>
    <property type="match status" value="1"/>
</dbReference>
<dbReference type="InterPro" id="IPR012719">
    <property type="entry name" value="Chap_CCT_gamma"/>
</dbReference>
<dbReference type="InterPro" id="IPR017998">
    <property type="entry name" value="Chaperone_TCP-1"/>
</dbReference>
<dbReference type="InterPro" id="IPR002194">
    <property type="entry name" value="Chaperonin_TCP-1_CS"/>
</dbReference>
<dbReference type="InterPro" id="IPR002423">
    <property type="entry name" value="Cpn60/GroEL/TCP-1"/>
</dbReference>
<dbReference type="InterPro" id="IPR027409">
    <property type="entry name" value="GroEL-like_apical_dom_sf"/>
</dbReference>
<dbReference type="InterPro" id="IPR027413">
    <property type="entry name" value="GROEL-like_equatorial_sf"/>
</dbReference>
<dbReference type="InterPro" id="IPR027410">
    <property type="entry name" value="TCP-1-like_intermed_sf"/>
</dbReference>
<dbReference type="InterPro" id="IPR053374">
    <property type="entry name" value="TCP-1_chaperonin"/>
</dbReference>
<dbReference type="InterPro" id="IPR054827">
    <property type="entry name" value="thermosome_alpha"/>
</dbReference>
<dbReference type="NCBIfam" id="TIGR02344">
    <property type="entry name" value="chap_CCT_gamma"/>
    <property type="match status" value="1"/>
</dbReference>
<dbReference type="NCBIfam" id="NF041082">
    <property type="entry name" value="thermosome_alpha"/>
    <property type="match status" value="1"/>
</dbReference>
<dbReference type="NCBIfam" id="NF041083">
    <property type="entry name" value="thermosome_beta"/>
    <property type="match status" value="1"/>
</dbReference>
<dbReference type="PANTHER" id="PTHR11353">
    <property type="entry name" value="CHAPERONIN"/>
    <property type="match status" value="1"/>
</dbReference>
<dbReference type="Pfam" id="PF00118">
    <property type="entry name" value="Cpn60_TCP1"/>
    <property type="match status" value="1"/>
</dbReference>
<dbReference type="PRINTS" id="PR00304">
    <property type="entry name" value="TCOMPLEXTCP1"/>
</dbReference>
<dbReference type="SUPFAM" id="SSF52029">
    <property type="entry name" value="GroEL apical domain-like"/>
    <property type="match status" value="1"/>
</dbReference>
<dbReference type="SUPFAM" id="SSF48592">
    <property type="entry name" value="GroEL equatorial domain-like"/>
    <property type="match status" value="1"/>
</dbReference>
<dbReference type="SUPFAM" id="SSF54849">
    <property type="entry name" value="GroEL-intermediate domain like"/>
    <property type="match status" value="1"/>
</dbReference>
<dbReference type="PROSITE" id="PS00750">
    <property type="entry name" value="TCP1_1"/>
    <property type="match status" value="1"/>
</dbReference>
<dbReference type="PROSITE" id="PS00751">
    <property type="entry name" value="TCP1_2"/>
    <property type="match status" value="1"/>
</dbReference>
<dbReference type="PROSITE" id="PS00995">
    <property type="entry name" value="TCP1_3"/>
    <property type="match status" value="1"/>
</dbReference>
<protein>
    <recommendedName>
        <fullName>T-complex protein 1 subunit gamma</fullName>
        <shortName>TCP-1-gamma</shortName>
        <ecNumber evidence="2">3.6.1.-</ecNumber>
    </recommendedName>
    <alternativeName>
        <fullName>CCT-gamma</fullName>
    </alternativeName>
</protein>
<organism>
    <name type="scientific">Xenopus laevis</name>
    <name type="common">African clawed frog</name>
    <dbReference type="NCBI Taxonomy" id="8355"/>
    <lineage>
        <taxon>Eukaryota</taxon>
        <taxon>Metazoa</taxon>
        <taxon>Chordata</taxon>
        <taxon>Craniata</taxon>
        <taxon>Vertebrata</taxon>
        <taxon>Euteleostomi</taxon>
        <taxon>Amphibia</taxon>
        <taxon>Batrachia</taxon>
        <taxon>Anura</taxon>
        <taxon>Pipoidea</taxon>
        <taxon>Pipidae</taxon>
        <taxon>Xenopodinae</taxon>
        <taxon>Xenopus</taxon>
        <taxon>Xenopus</taxon>
    </lineage>
</organism>
<proteinExistence type="evidence at transcript level"/>
<accession>P50143</accession>
<accession>Q5D0A0</accession>
<evidence type="ECO:0000250" key="1"/>
<evidence type="ECO:0000250" key="2">
    <source>
        <dbReference type="UniProtKB" id="P49368"/>
    </source>
</evidence>
<evidence type="ECO:0000256" key="3">
    <source>
        <dbReference type="SAM" id="MobiDB-lite"/>
    </source>
</evidence>
<evidence type="ECO:0000305" key="4"/>
<name>TCPG_XENLA</name>
<reference key="1">
    <citation type="journal article" date="1996" name="Dev. Dyn.">
        <title>Cloning and expression of Xenopus CCT gamma, a chaperonin subunit developmentally regulated in neural-derived and myogenic lineages.</title>
        <authorList>
            <person name="Dunn M.K."/>
            <person name="Mercola M."/>
        </authorList>
    </citation>
    <scope>NUCLEOTIDE SEQUENCE [MRNA]</scope>
</reference>
<reference key="2">
    <citation type="journal article" date="1996" name="Biochim. Biophys. Acta">
        <title>Molecular characterisation of the Xenopus laevis chaperonin gene Cctg.</title>
        <authorList>
            <person name="Walkley N.A."/>
            <person name="Page R.A."/>
            <person name="Malik A.N."/>
        </authorList>
    </citation>
    <scope>NUCLEOTIDE SEQUENCE [MRNA]</scope>
</reference>
<reference key="3">
    <citation type="submission" date="2003-03" db="EMBL/GenBank/DDBJ databases">
        <authorList>
            <consortium name="NIH - Xenopus Gene Collection (XGC) project"/>
        </authorList>
    </citation>
    <scope>NUCLEOTIDE SEQUENCE [LARGE SCALE MRNA]</scope>
    <source>
        <tissue>Embryo</tissue>
    </source>
</reference>
<comment type="function">
    <text evidence="2">Component of the chaperonin-containing T-complex (TRiC), a molecular chaperone complex that assists the folding of actin, tubulin and other proteins upon ATP hydrolysis.</text>
</comment>
<comment type="catalytic activity">
    <reaction evidence="2">
        <text>ATP + H2O = ADP + phosphate + H(+)</text>
        <dbReference type="Rhea" id="RHEA:13065"/>
        <dbReference type="ChEBI" id="CHEBI:15377"/>
        <dbReference type="ChEBI" id="CHEBI:15378"/>
        <dbReference type="ChEBI" id="CHEBI:30616"/>
        <dbReference type="ChEBI" id="CHEBI:43474"/>
        <dbReference type="ChEBI" id="CHEBI:456216"/>
    </reaction>
</comment>
<comment type="subunit">
    <text evidence="2">Component of the chaperonin-containing T-complex (TRiC), a hexadecamer composed of two identical back-to-back stacked rings enclosing a protein folding chamber. Each ring is made up of eight different subunits: TCP1/CCT1, CCT2, CCT3, CCT4, CCT5, CCT6A/CCT6, CCT7, CCT8.</text>
</comment>
<comment type="subcellular location">
    <subcellularLocation>
        <location evidence="4">Cytoplasm</location>
    </subcellularLocation>
</comment>
<comment type="similarity">
    <text evidence="4">Belongs to the TCP-1 chaperonin family.</text>
</comment>
<keyword id="KW-0067">ATP-binding</keyword>
<keyword id="KW-0143">Chaperone</keyword>
<keyword id="KW-0963">Cytoplasm</keyword>
<keyword id="KW-1015">Disulfide bond</keyword>
<keyword id="KW-0378">Hydrolase</keyword>
<keyword id="KW-0460">Magnesium</keyword>
<keyword id="KW-0479">Metal-binding</keyword>
<keyword id="KW-0547">Nucleotide-binding</keyword>
<keyword id="KW-1185">Reference proteome</keyword>
<sequence length="547" mass="60636">MMGRPVLVLSQNMKRESGRKVQSGNINAAKTIADIIRTCLGPRAMMKMLLDPMGGIVMTNDGNAILREIQVQHPAAKSMIEISRTQDEEVGDGTTSVIILAGEMLSVAEQFLEQQMHPTVIISAYRKALDDMVNTLKEISTPVDTNDRELMLKIINSAINTKAIKLWADMACGIALDAVKTVELEENGRKEIDIKKYAKVEKIPGGIIEDSCVLRGVMVNKDVTHPKMRRLIKNPRIILLDCSLEYKKGESQTEIEITREEDFARILQMEEEYIQQVCEDIIRLKPDVVITEKGISDLAQHYLVKANITAVRRVRKTDNNRIARACGARIASRTDELREEDVGTGAGLFEIKKIGDEYFTFITDCKDPKACTIVLRGASKEILAEVERNLQDAMQVCRNVVIDPYLVPGGGASEMSVAHILTEKSKTMTGVEQWPYRAVAQALEVIPRTLIQNCGASTIRILTSLRAKHTQEGCQTWGVDGEAGVLADMKELGIWEPLAVKLQTYKTAVETAILLLRIDDIVSGHKKKGEDHGRQPAAAPEAPQQAE</sequence>
<gene>
    <name type="primary">cct3</name>
    <name type="synonym">cctg</name>
</gene>
<feature type="chain" id="PRO_0000128325" description="T-complex protein 1 subunit gamma">
    <location>
        <begin position="1"/>
        <end position="547"/>
    </location>
</feature>
<feature type="region of interest" description="Disordered" evidence="3">
    <location>
        <begin position="525"/>
        <end position="547"/>
    </location>
</feature>
<feature type="compositionally biased region" description="Basic and acidic residues" evidence="3">
    <location>
        <begin position="525"/>
        <end position="534"/>
    </location>
</feature>
<feature type="compositionally biased region" description="Low complexity" evidence="3">
    <location>
        <begin position="535"/>
        <end position="547"/>
    </location>
</feature>
<feature type="binding site" evidence="2">
    <location>
        <position position="41"/>
    </location>
    <ligand>
        <name>ADP</name>
        <dbReference type="ChEBI" id="CHEBI:456216"/>
    </ligand>
</feature>
<feature type="binding site" evidence="2">
    <location>
        <position position="41"/>
    </location>
    <ligand>
        <name>ATP</name>
        <dbReference type="ChEBI" id="CHEBI:30616"/>
    </ligand>
</feature>
<feature type="binding site" evidence="2">
    <location>
        <position position="92"/>
    </location>
    <ligand>
        <name>Mg(2+)</name>
        <dbReference type="ChEBI" id="CHEBI:18420"/>
    </ligand>
</feature>
<feature type="binding site" evidence="2">
    <location>
        <position position="93"/>
    </location>
    <ligand>
        <name>ADP</name>
        <dbReference type="ChEBI" id="CHEBI:456216"/>
    </ligand>
</feature>
<feature type="binding site" evidence="2">
    <location>
        <position position="93"/>
    </location>
    <ligand>
        <name>ATP</name>
        <dbReference type="ChEBI" id="CHEBI:30616"/>
    </ligand>
</feature>
<feature type="binding site" evidence="2">
    <location>
        <position position="94"/>
    </location>
    <ligand>
        <name>ADP</name>
        <dbReference type="ChEBI" id="CHEBI:456216"/>
    </ligand>
</feature>
<feature type="binding site" evidence="2">
    <location>
        <position position="94"/>
    </location>
    <ligand>
        <name>ATP</name>
        <dbReference type="ChEBI" id="CHEBI:30616"/>
    </ligand>
</feature>
<feature type="binding site" evidence="2">
    <location>
        <position position="95"/>
    </location>
    <ligand>
        <name>ADP</name>
        <dbReference type="ChEBI" id="CHEBI:456216"/>
    </ligand>
</feature>
<feature type="binding site" evidence="2">
    <location>
        <position position="95"/>
    </location>
    <ligand>
        <name>ATP</name>
        <dbReference type="ChEBI" id="CHEBI:30616"/>
    </ligand>
</feature>
<feature type="binding site" evidence="2">
    <location>
        <position position="96"/>
    </location>
    <ligand>
        <name>ADP</name>
        <dbReference type="ChEBI" id="CHEBI:456216"/>
    </ligand>
</feature>
<feature type="binding site" evidence="2">
    <location>
        <position position="161"/>
    </location>
    <ligand>
        <name>ADP</name>
        <dbReference type="ChEBI" id="CHEBI:456216"/>
    </ligand>
</feature>
<feature type="binding site" evidence="2">
    <location>
        <position position="162"/>
    </location>
    <ligand>
        <name>ADP</name>
        <dbReference type="ChEBI" id="CHEBI:456216"/>
    </ligand>
</feature>
<feature type="binding site" evidence="2">
    <location>
        <position position="410"/>
    </location>
    <ligand>
        <name>ADP</name>
        <dbReference type="ChEBI" id="CHEBI:456216"/>
    </ligand>
</feature>
<feature type="binding site" evidence="2">
    <location>
        <position position="410"/>
    </location>
    <ligand>
        <name>ATP</name>
        <dbReference type="ChEBI" id="CHEBI:30616"/>
    </ligand>
</feature>
<feature type="binding site" evidence="2">
    <location>
        <position position="481"/>
    </location>
    <ligand>
        <name>ADP</name>
        <dbReference type="ChEBI" id="CHEBI:456216"/>
    </ligand>
</feature>
<feature type="binding site" evidence="2">
    <location>
        <position position="481"/>
    </location>
    <ligand>
        <name>ATP</name>
        <dbReference type="ChEBI" id="CHEBI:30616"/>
    </ligand>
</feature>
<feature type="binding site" evidence="2">
    <location>
        <position position="482"/>
    </location>
    <ligand>
        <name>ADP</name>
        <dbReference type="ChEBI" id="CHEBI:456216"/>
    </ligand>
</feature>
<feature type="binding site" evidence="2">
    <location>
        <position position="496"/>
    </location>
    <ligand>
        <name>ADP</name>
        <dbReference type="ChEBI" id="CHEBI:456216"/>
    </ligand>
</feature>
<feature type="binding site" evidence="2">
    <location>
        <position position="496"/>
    </location>
    <ligand>
        <name>ATP</name>
        <dbReference type="ChEBI" id="CHEBI:30616"/>
    </ligand>
</feature>
<feature type="binding site" evidence="2">
    <location>
        <position position="501"/>
    </location>
    <ligand>
        <name>ADP</name>
        <dbReference type="ChEBI" id="CHEBI:456216"/>
    </ligand>
</feature>
<feature type="disulfide bond" evidence="1">
    <location>
        <begin position="365"/>
        <end position="371"/>
    </location>
</feature>
<feature type="sequence conflict" description="In Ref. 1; AAC59783." evidence="4" ref="1">
    <original>M</original>
    <variation>V</variation>
    <location>
        <position position="45"/>
    </location>
</feature>